<protein>
    <recommendedName>
        <fullName>Serine/threonine-protein kinase D2</fullName>
        <ecNumber evidence="5">2.7.11.13</ecNumber>
    </recommendedName>
    <alternativeName>
        <fullName>nPKC-D2</fullName>
    </alternativeName>
</protein>
<organism>
    <name type="scientific">Rattus norvegicus</name>
    <name type="common">Rat</name>
    <dbReference type="NCBI Taxonomy" id="10116"/>
    <lineage>
        <taxon>Eukaryota</taxon>
        <taxon>Metazoa</taxon>
        <taxon>Chordata</taxon>
        <taxon>Craniata</taxon>
        <taxon>Vertebrata</taxon>
        <taxon>Euteleostomi</taxon>
        <taxon>Mammalia</taxon>
        <taxon>Eutheria</taxon>
        <taxon>Euarchontoglires</taxon>
        <taxon>Glires</taxon>
        <taxon>Rodentia</taxon>
        <taxon>Myomorpha</taxon>
        <taxon>Muroidea</taxon>
        <taxon>Muridae</taxon>
        <taxon>Murinae</taxon>
        <taxon>Rattus</taxon>
    </lineage>
</organism>
<name>KPCD2_RAT</name>
<proteinExistence type="evidence at protein level"/>
<feature type="chain" id="PRO_0000260437" description="Serine/threonine-protein kinase D2">
    <location>
        <begin position="1"/>
        <end position="875"/>
    </location>
</feature>
<feature type="domain" description="PH" evidence="6">
    <location>
        <begin position="398"/>
        <end position="510"/>
    </location>
</feature>
<feature type="domain" description="Protein kinase" evidence="7">
    <location>
        <begin position="552"/>
        <end position="808"/>
    </location>
</feature>
<feature type="zinc finger region" description="Phorbol-ester/DAG-type 1" evidence="8">
    <location>
        <begin position="138"/>
        <end position="188"/>
    </location>
</feature>
<feature type="zinc finger region" description="Phorbol-ester/DAG-type 2" evidence="8">
    <location>
        <begin position="265"/>
        <end position="315"/>
    </location>
</feature>
<feature type="region of interest" description="Disordered" evidence="10">
    <location>
        <begin position="1"/>
        <end position="33"/>
    </location>
</feature>
<feature type="region of interest" description="Disordered" evidence="10">
    <location>
        <begin position="224"/>
        <end position="247"/>
    </location>
</feature>
<feature type="short sequence motif" description="Important for ABL1-mediated Tyr-718 phosphorylation" evidence="5">
    <location>
        <begin position="725"/>
        <end position="727"/>
    </location>
</feature>
<feature type="compositionally biased region" description="Pro residues" evidence="10">
    <location>
        <begin position="14"/>
        <end position="24"/>
    </location>
</feature>
<feature type="compositionally biased region" description="Low complexity" evidence="10">
    <location>
        <begin position="236"/>
        <end position="245"/>
    </location>
</feature>
<feature type="active site" description="Proton acceptor" evidence="7 9">
    <location>
        <position position="675"/>
    </location>
</feature>
<feature type="binding site" evidence="7">
    <location>
        <begin position="558"/>
        <end position="566"/>
    </location>
    <ligand>
        <name>ATP</name>
        <dbReference type="ChEBI" id="CHEBI:30616"/>
    </ligand>
</feature>
<feature type="binding site" evidence="7">
    <location>
        <position position="581"/>
    </location>
    <ligand>
        <name>ATP</name>
        <dbReference type="ChEBI" id="CHEBI:30616"/>
    </ligand>
</feature>
<feature type="modified residue" description="Phosphoserine" evidence="2">
    <location>
        <position position="26"/>
    </location>
</feature>
<feature type="modified residue" description="Phosphoserine" evidence="2">
    <location>
        <position position="30"/>
    </location>
</feature>
<feature type="modified residue" description="Phosphotyrosine" evidence="3">
    <location>
        <position position="87"/>
    </location>
</feature>
<feature type="modified residue" description="Phosphoserine" evidence="12">
    <location>
        <position position="197"/>
    </location>
</feature>
<feature type="modified residue" description="Phosphoserine" evidence="5">
    <location>
        <position position="198"/>
    </location>
</feature>
<feature type="modified residue" description="Phosphoserine" evidence="5">
    <location>
        <position position="200"/>
    </location>
</feature>
<feature type="modified residue" description="Phosphoserine" evidence="12">
    <location>
        <position position="203"/>
    </location>
</feature>
<feature type="modified residue" description="Phosphoserine" evidence="5">
    <location>
        <position position="206"/>
    </location>
</feature>
<feature type="modified residue" description="Phosphoserine" evidence="12">
    <location>
        <position position="211"/>
    </location>
</feature>
<feature type="modified residue" description="Phosphoserine" evidence="4">
    <location>
        <position position="212"/>
    </location>
</feature>
<feature type="modified residue" description="Phosphoserine" evidence="12">
    <location>
        <position position="214"/>
    </location>
</feature>
<feature type="modified residue" description="Phosphoserine; by CSNK1D and CSNK1E" evidence="5">
    <location>
        <position position="244"/>
    </location>
</feature>
<feature type="modified residue" description="Phosphoserine" evidence="5">
    <location>
        <position position="245"/>
    </location>
</feature>
<feature type="modified residue" description="Phosphotyrosine" evidence="3">
    <location>
        <position position="408"/>
    </location>
</feature>
<feature type="modified residue" description="Phosphotyrosine; by ABL1" evidence="5">
    <location>
        <position position="439"/>
    </location>
</feature>
<feature type="modified residue" description="Phosphoserine" evidence="5">
    <location>
        <position position="519"/>
    </location>
</feature>
<feature type="modified residue" description="Phosphoserine; by PKC" evidence="3">
    <location>
        <position position="707"/>
    </location>
</feature>
<feature type="modified residue" description="Phosphoserine" evidence="12">
    <location>
        <position position="711"/>
    </location>
</feature>
<feature type="modified residue" description="Phosphotyrosine; by ABL1" evidence="5">
    <location>
        <position position="718"/>
    </location>
</feature>
<feature type="modified residue" description="Phosphoserine; by autocatalysis" evidence="5">
    <location>
        <position position="873"/>
    </location>
</feature>
<evidence type="ECO:0000250" key="1"/>
<evidence type="ECO:0000250" key="2">
    <source>
        <dbReference type="UniProtKB" id="O94806"/>
    </source>
</evidence>
<evidence type="ECO:0000250" key="3">
    <source>
        <dbReference type="UniProtKB" id="Q15139"/>
    </source>
</evidence>
<evidence type="ECO:0000250" key="4">
    <source>
        <dbReference type="UniProtKB" id="Q8BZ03"/>
    </source>
</evidence>
<evidence type="ECO:0000250" key="5">
    <source>
        <dbReference type="UniProtKB" id="Q9BZL6"/>
    </source>
</evidence>
<evidence type="ECO:0000255" key="6">
    <source>
        <dbReference type="PROSITE-ProRule" id="PRU00145"/>
    </source>
</evidence>
<evidence type="ECO:0000255" key="7">
    <source>
        <dbReference type="PROSITE-ProRule" id="PRU00159"/>
    </source>
</evidence>
<evidence type="ECO:0000255" key="8">
    <source>
        <dbReference type="PROSITE-ProRule" id="PRU00226"/>
    </source>
</evidence>
<evidence type="ECO:0000255" key="9">
    <source>
        <dbReference type="PROSITE-ProRule" id="PRU10027"/>
    </source>
</evidence>
<evidence type="ECO:0000256" key="10">
    <source>
        <dbReference type="SAM" id="MobiDB-lite"/>
    </source>
</evidence>
<evidence type="ECO:0000305" key="11"/>
<evidence type="ECO:0007744" key="12">
    <source>
    </source>
</evidence>
<gene>
    <name type="primary">Prkd2</name>
</gene>
<sequence>MAAAPSHPAGLPCSPGPGSPPPPGGSDLQSLPPLLPQIPAPGSGVSFHIQIGLTREFVLLPAASELAHVKQLACSIVDQKFPECGFYGLYDKILLFKHDPTSANLLQLVRSAADIQEGDLVEVVLSASATFEDFQIRPHALTVHSYRAPAFCDHCGEMLFGLVRQGLKCDGCGLNYHKRCAFSIPNNCSGARKRRLSSTSLASGHSVRLGSSESLPCTAEELSRSTTDLLPRRPPSSSSSSSSSSFYTGRPIELDKMLMSKVKVPHTFLIHSYTRPTVCQACKKLLKGLFRQGLQCKDCKFNCHKRCATRVPNDCLGEALINGDVPMEEAADYSEADKSSLSDELEDSGVIPGSHAENALHASEEEEGEGGKAQSSLGYIPLMRVVQSVRHTTRKSSTTLREGWVVHYSNKDTLRKRHYWRLDCKCITLFQNNTTNRYYKEIPLSEILAVEPAQNFSLVPPGTNPHCFEIITANVTYFVGETPGGAPGGPSGQGTEAARGWETAIRQALMPVILQDAPSAPGHTPHRQASLSISVSNSQIQENVDIATVYQIFPDEVLGSGQFGVVYGGKHRKTGRDVAVKVIDKLRFPTKQESQLRNEVAILQSLRHPGIVNLECMFETPEKVFVVMEKLHGDMLEMILSSEKGRLPERLTKFLITQILVALRHLHFKNIVHCDLKPENVLLASADPFPQVKLCDFGFARIIGEKSFRRSVVGTPAYLAPEVLLNQGYNRSLDMWSVGVIMYVSLSGTFPFNEDEDINDQIQNAAFMYPASPWSHISSGAIDLINNLLQVKMRKRYSVDKSLSHPWLQEYQTWLDLRELEGKMGERYITHESDDARWDQFVSERHGTPAEGDLGGACLPQDHEMQGLAERISIL</sequence>
<accession>Q5XIS9</accession>
<keyword id="KW-1064">Adaptive immunity</keyword>
<keyword id="KW-0037">Angiogenesis</keyword>
<keyword id="KW-0067">ATP-binding</keyword>
<keyword id="KW-0130">Cell adhesion</keyword>
<keyword id="KW-1003">Cell membrane</keyword>
<keyword id="KW-0963">Cytoplasm</keyword>
<keyword id="KW-0333">Golgi apparatus</keyword>
<keyword id="KW-0391">Immunity</keyword>
<keyword id="KW-0418">Kinase</keyword>
<keyword id="KW-0460">Magnesium</keyword>
<keyword id="KW-0472">Membrane</keyword>
<keyword id="KW-0479">Metal-binding</keyword>
<keyword id="KW-0547">Nucleotide-binding</keyword>
<keyword id="KW-0597">Phosphoprotein</keyword>
<keyword id="KW-1185">Reference proteome</keyword>
<keyword id="KW-0677">Repeat</keyword>
<keyword id="KW-0723">Serine/threonine-protein kinase</keyword>
<keyword id="KW-0808">Transferase</keyword>
<keyword id="KW-0862">Zinc</keyword>
<keyword id="KW-0863">Zinc-finger</keyword>
<comment type="function">
    <text evidence="1">Serine/threonine-protein kinase that converts transient diacylglycerol (DAG) signals into prolonged physiological effects downstream of PKC, and is involved in the regulation of cell proliferation via MAPK1/3 (ERK1/2) signaling, oxidative stress-induced NF-kappa-B activation, inhibition of HDAC7 transcriptional repression, signaling downstream of T-cell antigen receptor (TCR) and cytokine production, and plays a role in Golgi membrane trafficking, angiogenesis, secretory granule release and cell adhesion. May potentiate mitogenesis induced by the neuropeptide bombesin by mediating an increase in the duration of MAPK1/3 (ERK1/2) signaling, which leads to accumulation of immediate-early gene products including FOS that stimulate cell cycle progression. In response to oxidative stress, is phosphorylated at Tyr-438 and Tyr-718 by ABL1, which leads to the activation of PRKD2 without increasing its catalytic activity, and mediates activation of NF-kappa-B. In response to the activation of the gastrin receptor CCKBR, is phosphorylated at Ser-244 by CSNK1D and CSNK1E, translocates to the nucleus, phosphorylates HDAC7, leading to nuclear export of HDAC7 and inhibition of HDAC7 transcriptional repression of NR4A1/NUR77. Upon TCR stimulation, is activated independently of ZAP70, translocates from the cytoplasm to the nucleus and is required for interleukin-2 (IL2) promoter up-regulation. During adaptive immune responses, is required in peripheral T-lymphocytes for the production of the effector cytokines IL2 and IFNG after TCR engagement and for optimal induction of antibody responses to antigens. In epithelial cells stimulated with lysophosphatidic acid (LPA), is activated through a PKC-dependent pathway and mediates LPA-stimulated interleukin-8 (IL8) secretion via a NF-kappa-B-dependent pathway. During TCR-induced T-cell activation, interacts with and is activated by the tyrosine kinase LCK, which results in the activation of the NFAT transcription factors. In the trans-Golgi network (TGN), regulates the fission of transport vesicles that are on their way to the plasma membrane and in polarized cells is involved in the transport of proteins from the TGN to the basolateral membrane. Plays an important role in endothelial cell proliferation and migration prior to angiogenesis, partly through modulation of the expression of KDR/VEGFR2 and FGFR1, two key growth factor receptors involved in angiogenesis. In secretory pathway, is required for the release of chromogranin-A (CHGA)-containing secretory granules from the TGN. Downstream of PRKCA, plays important roles in angiotensin-2-induced monocyte adhesion to endothelial cells.</text>
</comment>
<comment type="catalytic activity">
    <reaction evidence="5">
        <text>L-seryl-[protein] + ATP = O-phospho-L-seryl-[protein] + ADP + H(+)</text>
        <dbReference type="Rhea" id="RHEA:17989"/>
        <dbReference type="Rhea" id="RHEA-COMP:9863"/>
        <dbReference type="Rhea" id="RHEA-COMP:11604"/>
        <dbReference type="ChEBI" id="CHEBI:15378"/>
        <dbReference type="ChEBI" id="CHEBI:29999"/>
        <dbReference type="ChEBI" id="CHEBI:30616"/>
        <dbReference type="ChEBI" id="CHEBI:83421"/>
        <dbReference type="ChEBI" id="CHEBI:456216"/>
        <dbReference type="EC" id="2.7.11.13"/>
    </reaction>
</comment>
<comment type="catalytic activity">
    <reaction evidence="5">
        <text>L-threonyl-[protein] + ATP = O-phospho-L-threonyl-[protein] + ADP + H(+)</text>
        <dbReference type="Rhea" id="RHEA:46608"/>
        <dbReference type="Rhea" id="RHEA-COMP:11060"/>
        <dbReference type="Rhea" id="RHEA-COMP:11605"/>
        <dbReference type="ChEBI" id="CHEBI:15378"/>
        <dbReference type="ChEBI" id="CHEBI:30013"/>
        <dbReference type="ChEBI" id="CHEBI:30616"/>
        <dbReference type="ChEBI" id="CHEBI:61977"/>
        <dbReference type="ChEBI" id="CHEBI:456216"/>
        <dbReference type="EC" id="2.7.11.13"/>
    </reaction>
</comment>
<comment type="cofactor">
    <cofactor evidence="5">
        <name>Mg(2+)</name>
        <dbReference type="ChEBI" id="CHEBI:18420"/>
    </cofactor>
</comment>
<comment type="activity regulation">
    <text evidence="5">Activated by DAG and phorbol esters. Phorbol-ester/DAG-type domains bind DAG, mediating translocation to membranes. Autophosphorylation of Ser-711 and phosphorylation of Ser-707 by PKC relieves auto-inhibition by the PH domain. Catalytic activity is further increased by phosphorylation at Tyr-718 in response to oxidative stress.</text>
</comment>
<comment type="subunit">
    <text evidence="5">Interacts (via C-terminus) with LCK. Interacts (via N-terminus and zing-finger domain 1 and 2) with PRKCD in response to oxidative stress; the interaction is independent of PRKD2 tyrosine phosphorylation.</text>
</comment>
<comment type="subcellular location">
    <subcellularLocation>
        <location evidence="5">Cytoplasm</location>
    </subcellularLocation>
    <subcellularLocation>
        <location evidence="3">Cell membrane</location>
    </subcellularLocation>
    <subcellularLocation>
        <location evidence="5">Golgi apparatus</location>
        <location evidence="5">trans-Golgi network</location>
    </subcellularLocation>
    <text evidence="5">Translocation to the cell membrane is required for kinase activation. Accumulates in the nucleus upon CK1-mediated phosphorylation after activation of G-protein-coupled receptors. Nuclear accumulation is regulated by blocking nuclear export of active PRKD2 rather than by increasing import.</text>
</comment>
<comment type="PTM">
    <text evidence="5">Phosphorylation of Ser-873 correlates with the activation status of the kinase. Ser-707 is probably phosphorylated by PKC. Phosphorylation at Ser-244 by CSNK1D and CSNK1E promotes nuclear localization and substrate targeting. Phosphorylation at Ser-244, Ser-707 and Ser-711 is required for nuclear localization. Phosphorylated at Tyr-438 by ABL1 in response to oxidative stress. Phosphorylated at Tyr-718 by ABL1 specifically in response to oxidative stress; requires prior phosphorylation at Ser-707 or/and Ser-711.</text>
</comment>
<comment type="similarity">
    <text evidence="11">Belongs to the protein kinase superfamily. CAMK Ser/Thr protein kinase family. PKD subfamily.</text>
</comment>
<reference key="1">
    <citation type="journal article" date="2004" name="Genome Res.">
        <title>The status, quality, and expansion of the NIH full-length cDNA project: the Mammalian Gene Collection (MGC).</title>
        <authorList>
            <consortium name="The MGC Project Team"/>
        </authorList>
    </citation>
    <scope>NUCLEOTIDE SEQUENCE [LARGE SCALE MRNA]</scope>
    <source>
        <tissue>Testis</tissue>
    </source>
</reference>
<reference key="2">
    <citation type="journal article" date="2012" name="Nat. Commun.">
        <title>Quantitative maps of protein phosphorylation sites across 14 different rat organs and tissues.</title>
        <authorList>
            <person name="Lundby A."/>
            <person name="Secher A."/>
            <person name="Lage K."/>
            <person name="Nordsborg N.B."/>
            <person name="Dmytriyev A."/>
            <person name="Lundby C."/>
            <person name="Olsen J.V."/>
        </authorList>
    </citation>
    <scope>PHOSPHORYLATION [LARGE SCALE ANALYSIS] AT SER-197; SER-203; SER-211; SER-214 AND SER-711</scope>
    <scope>IDENTIFICATION BY MASS SPECTROMETRY [LARGE SCALE ANALYSIS]</scope>
</reference>
<dbReference type="EC" id="2.7.11.13" evidence="5"/>
<dbReference type="EMBL" id="BC083592">
    <property type="protein sequence ID" value="AAH83592.1"/>
    <property type="molecule type" value="mRNA"/>
</dbReference>
<dbReference type="RefSeq" id="NP_001013917.1">
    <property type="nucleotide sequence ID" value="NM_001013895.1"/>
</dbReference>
<dbReference type="RefSeq" id="XP_063139153.1">
    <property type="nucleotide sequence ID" value="XM_063283083.1"/>
</dbReference>
<dbReference type="SMR" id="Q5XIS9"/>
<dbReference type="FunCoup" id="Q5XIS9">
    <property type="interactions" value="1047"/>
</dbReference>
<dbReference type="STRING" id="10116.ENSRNOP00000022360"/>
<dbReference type="iPTMnet" id="Q5XIS9"/>
<dbReference type="PhosphoSitePlus" id="Q5XIS9"/>
<dbReference type="PaxDb" id="10116-ENSRNOP00000022360"/>
<dbReference type="Ensembl" id="ENSRNOT00000022360.6">
    <property type="protein sequence ID" value="ENSRNOP00000022360.3"/>
    <property type="gene ID" value="ENSRNOG00000016434.6"/>
</dbReference>
<dbReference type="GeneID" id="292658"/>
<dbReference type="KEGG" id="rno:292658"/>
<dbReference type="UCSC" id="RGD:1308054">
    <property type="organism name" value="rat"/>
</dbReference>
<dbReference type="AGR" id="RGD:1308054"/>
<dbReference type="CTD" id="25865"/>
<dbReference type="RGD" id="1308054">
    <property type="gene designation" value="Prkd2"/>
</dbReference>
<dbReference type="eggNOG" id="KOG4236">
    <property type="taxonomic scope" value="Eukaryota"/>
</dbReference>
<dbReference type="GeneTree" id="ENSGT00950000183024"/>
<dbReference type="HOGENOM" id="CLU_009772_1_0_1"/>
<dbReference type="InParanoid" id="Q5XIS9"/>
<dbReference type="OMA" id="PNNCSHD"/>
<dbReference type="OrthoDB" id="74314at2759"/>
<dbReference type="PhylomeDB" id="Q5XIS9"/>
<dbReference type="TreeFam" id="TF314320"/>
<dbReference type="PRO" id="PR:Q5XIS9"/>
<dbReference type="Proteomes" id="UP000002494">
    <property type="component" value="Chromosome 1"/>
</dbReference>
<dbReference type="Bgee" id="ENSRNOG00000016434">
    <property type="expression patterns" value="Expressed in thymus and 19 other cell types or tissues"/>
</dbReference>
<dbReference type="GO" id="GO:0005737">
    <property type="term" value="C:cytoplasm"/>
    <property type="evidence" value="ECO:0000266"/>
    <property type="project" value="RGD"/>
</dbReference>
<dbReference type="GO" id="GO:0005829">
    <property type="term" value="C:cytosol"/>
    <property type="evidence" value="ECO:0000318"/>
    <property type="project" value="GO_Central"/>
</dbReference>
<dbReference type="GO" id="GO:0005794">
    <property type="term" value="C:Golgi apparatus"/>
    <property type="evidence" value="ECO:0007669"/>
    <property type="project" value="UniProtKB-SubCell"/>
</dbReference>
<dbReference type="GO" id="GO:0005654">
    <property type="term" value="C:nucleoplasm"/>
    <property type="evidence" value="ECO:0007669"/>
    <property type="project" value="Ensembl"/>
</dbReference>
<dbReference type="GO" id="GO:0005634">
    <property type="term" value="C:nucleus"/>
    <property type="evidence" value="ECO:0000266"/>
    <property type="project" value="RGD"/>
</dbReference>
<dbReference type="GO" id="GO:0005886">
    <property type="term" value="C:plasma membrane"/>
    <property type="evidence" value="ECO:0007669"/>
    <property type="project" value="UniProtKB-SubCell"/>
</dbReference>
<dbReference type="GO" id="GO:0005524">
    <property type="term" value="F:ATP binding"/>
    <property type="evidence" value="ECO:0007669"/>
    <property type="project" value="UniProtKB-KW"/>
</dbReference>
<dbReference type="GO" id="GO:0004697">
    <property type="term" value="F:diacylglycerol-dependent serine/threonine kinase activity"/>
    <property type="evidence" value="ECO:0007669"/>
    <property type="project" value="UniProtKB-EC"/>
</dbReference>
<dbReference type="GO" id="GO:0004672">
    <property type="term" value="F:protein kinase activity"/>
    <property type="evidence" value="ECO:0000266"/>
    <property type="project" value="RGD"/>
</dbReference>
<dbReference type="GO" id="GO:0005080">
    <property type="term" value="F:protein kinase C binding"/>
    <property type="evidence" value="ECO:0000266"/>
    <property type="project" value="RGD"/>
</dbReference>
<dbReference type="GO" id="GO:0106310">
    <property type="term" value="F:protein serine kinase activity"/>
    <property type="evidence" value="ECO:0000266"/>
    <property type="project" value="RGD"/>
</dbReference>
<dbReference type="GO" id="GO:0004674">
    <property type="term" value="F:protein serine/threonine kinase activity"/>
    <property type="evidence" value="ECO:0000266"/>
    <property type="project" value="RGD"/>
</dbReference>
<dbReference type="GO" id="GO:0008270">
    <property type="term" value="F:zinc ion binding"/>
    <property type="evidence" value="ECO:0007669"/>
    <property type="project" value="UniProtKB-KW"/>
</dbReference>
<dbReference type="GO" id="GO:0002250">
    <property type="term" value="P:adaptive immune response"/>
    <property type="evidence" value="ECO:0007669"/>
    <property type="project" value="UniProtKB-KW"/>
</dbReference>
<dbReference type="GO" id="GO:0001525">
    <property type="term" value="P:angiogenesis"/>
    <property type="evidence" value="ECO:0007669"/>
    <property type="project" value="UniProtKB-KW"/>
</dbReference>
<dbReference type="GO" id="GO:0007155">
    <property type="term" value="P:cell adhesion"/>
    <property type="evidence" value="ECO:0007669"/>
    <property type="project" value="UniProtKB-KW"/>
</dbReference>
<dbReference type="GO" id="GO:0035924">
    <property type="term" value="P:cellular response to vascular endothelial growth factor stimulus"/>
    <property type="evidence" value="ECO:0000266"/>
    <property type="project" value="RGD"/>
</dbReference>
<dbReference type="GO" id="GO:0035556">
    <property type="term" value="P:intracellular signal transduction"/>
    <property type="evidence" value="ECO:0000266"/>
    <property type="project" value="RGD"/>
</dbReference>
<dbReference type="GO" id="GO:0007200">
    <property type="term" value="P:phospholipase C-activating G protein-coupled receptor signaling pathway"/>
    <property type="evidence" value="ECO:0000318"/>
    <property type="project" value="GO_Central"/>
</dbReference>
<dbReference type="GO" id="GO:0045766">
    <property type="term" value="P:positive regulation of angiogenesis"/>
    <property type="evidence" value="ECO:0000250"/>
    <property type="project" value="UniProtKB"/>
</dbReference>
<dbReference type="GO" id="GO:0043536">
    <property type="term" value="P:positive regulation of blood vessel endothelial cell migration"/>
    <property type="evidence" value="ECO:0000266"/>
    <property type="project" value="RGD"/>
</dbReference>
<dbReference type="GO" id="GO:0045785">
    <property type="term" value="P:positive regulation of cell adhesion"/>
    <property type="evidence" value="ECO:0000250"/>
    <property type="project" value="UniProtKB"/>
</dbReference>
<dbReference type="GO" id="GO:2000573">
    <property type="term" value="P:positive regulation of DNA biosynthetic process"/>
    <property type="evidence" value="ECO:0000250"/>
    <property type="project" value="UniProtKB"/>
</dbReference>
<dbReference type="GO" id="GO:0051091">
    <property type="term" value="P:positive regulation of DNA-binding transcription factor activity"/>
    <property type="evidence" value="ECO:0000250"/>
    <property type="project" value="UniProtKB"/>
</dbReference>
<dbReference type="GO" id="GO:2001028">
    <property type="term" value="P:positive regulation of endothelial cell chemotaxis"/>
    <property type="evidence" value="ECO:0000266"/>
    <property type="project" value="RGD"/>
</dbReference>
<dbReference type="GO" id="GO:0010595">
    <property type="term" value="P:positive regulation of endothelial cell migration"/>
    <property type="evidence" value="ECO:0000250"/>
    <property type="project" value="UniProtKB"/>
</dbReference>
<dbReference type="GO" id="GO:0001938">
    <property type="term" value="P:positive regulation of endothelial cell proliferation"/>
    <property type="evidence" value="ECO:0000250"/>
    <property type="project" value="UniProtKB"/>
</dbReference>
<dbReference type="GO" id="GO:0070374">
    <property type="term" value="P:positive regulation of ERK1 and ERK2 cascade"/>
    <property type="evidence" value="ECO:0000250"/>
    <property type="project" value="UniProtKB"/>
</dbReference>
<dbReference type="GO" id="GO:0045743">
    <property type="term" value="P:positive regulation of fibroblast growth factor receptor signaling pathway"/>
    <property type="evidence" value="ECO:0000250"/>
    <property type="project" value="UniProtKB"/>
</dbReference>
<dbReference type="GO" id="GO:0032743">
    <property type="term" value="P:positive regulation of interleukin-2 production"/>
    <property type="evidence" value="ECO:0000250"/>
    <property type="project" value="UniProtKB"/>
</dbReference>
<dbReference type="GO" id="GO:0032757">
    <property type="term" value="P:positive regulation of interleukin-8 production"/>
    <property type="evidence" value="ECO:0000250"/>
    <property type="project" value="UniProtKB"/>
</dbReference>
<dbReference type="GO" id="GO:0051092">
    <property type="term" value="P:positive regulation of NF-kappaB transcription factor activity"/>
    <property type="evidence" value="ECO:0000250"/>
    <property type="project" value="UniProtKB"/>
</dbReference>
<dbReference type="GO" id="GO:0050862">
    <property type="term" value="P:positive regulation of T cell receptor signaling pathway"/>
    <property type="evidence" value="ECO:0000250"/>
    <property type="project" value="UniProtKB"/>
</dbReference>
<dbReference type="GO" id="GO:0045944">
    <property type="term" value="P:positive regulation of transcription by RNA polymerase II"/>
    <property type="evidence" value="ECO:0000266"/>
    <property type="project" value="RGD"/>
</dbReference>
<dbReference type="GO" id="GO:0030949">
    <property type="term" value="P:positive regulation of vascular endothelial growth factor receptor signaling pathway"/>
    <property type="evidence" value="ECO:0000250"/>
    <property type="project" value="UniProtKB"/>
</dbReference>
<dbReference type="GO" id="GO:0070232">
    <property type="term" value="P:regulation of T cell apoptotic process"/>
    <property type="evidence" value="ECO:0000266"/>
    <property type="project" value="RGD"/>
</dbReference>
<dbReference type="GO" id="GO:0050852">
    <property type="term" value="P:T cell receptor signaling pathway"/>
    <property type="evidence" value="ECO:0000266"/>
    <property type="project" value="RGD"/>
</dbReference>
<dbReference type="GO" id="GO:0048010">
    <property type="term" value="P:vascular endothelial growth factor receptor signaling pathway"/>
    <property type="evidence" value="ECO:0000266"/>
    <property type="project" value="RGD"/>
</dbReference>
<dbReference type="CDD" id="cd20840">
    <property type="entry name" value="C1_PKD2_rpt1"/>
    <property type="match status" value="1"/>
</dbReference>
<dbReference type="CDD" id="cd20843">
    <property type="entry name" value="C1_PKD2_rpt2"/>
    <property type="match status" value="1"/>
</dbReference>
<dbReference type="CDD" id="cd01239">
    <property type="entry name" value="PH_PKD"/>
    <property type="match status" value="1"/>
</dbReference>
<dbReference type="CDD" id="cd14082">
    <property type="entry name" value="STKc_PKD"/>
    <property type="match status" value="1"/>
</dbReference>
<dbReference type="FunFam" id="1.10.510.10:FF:000151">
    <property type="entry name" value="Serine/threonine-protein kinase"/>
    <property type="match status" value="1"/>
</dbReference>
<dbReference type="FunFam" id="2.30.29.30:FF:000056">
    <property type="entry name" value="Serine/threonine-protein kinase"/>
    <property type="match status" value="1"/>
</dbReference>
<dbReference type="FunFam" id="3.30.200.20:FF:000137">
    <property type="entry name" value="Serine/threonine-protein kinase"/>
    <property type="match status" value="1"/>
</dbReference>
<dbReference type="FunFam" id="3.30.60.20:FF:000007">
    <property type="entry name" value="Serine/threonine-protein kinase"/>
    <property type="match status" value="1"/>
</dbReference>
<dbReference type="FunFam" id="3.30.60.20:FF:000019">
    <property type="entry name" value="Serine/threonine-protein kinase"/>
    <property type="match status" value="1"/>
</dbReference>
<dbReference type="Gene3D" id="3.30.60.20">
    <property type="match status" value="2"/>
</dbReference>
<dbReference type="Gene3D" id="2.30.29.30">
    <property type="entry name" value="Pleckstrin-homology domain (PH domain)/Phosphotyrosine-binding domain (PTB)"/>
    <property type="match status" value="1"/>
</dbReference>
<dbReference type="Gene3D" id="1.10.510.10">
    <property type="entry name" value="Transferase(Phosphotransferase) domain 1"/>
    <property type="match status" value="1"/>
</dbReference>
<dbReference type="InterPro" id="IPR046349">
    <property type="entry name" value="C1-like_sf"/>
</dbReference>
<dbReference type="InterPro" id="IPR020454">
    <property type="entry name" value="DAG/PE-bd"/>
</dbReference>
<dbReference type="InterPro" id="IPR011009">
    <property type="entry name" value="Kinase-like_dom_sf"/>
</dbReference>
<dbReference type="InterPro" id="IPR002219">
    <property type="entry name" value="PE/DAG-bd"/>
</dbReference>
<dbReference type="InterPro" id="IPR011993">
    <property type="entry name" value="PH-like_dom_sf"/>
</dbReference>
<dbReference type="InterPro" id="IPR001849">
    <property type="entry name" value="PH_domain"/>
</dbReference>
<dbReference type="InterPro" id="IPR000719">
    <property type="entry name" value="Prot_kinase_dom"/>
</dbReference>
<dbReference type="InterPro" id="IPR017441">
    <property type="entry name" value="Protein_kinase_ATP_BS"/>
</dbReference>
<dbReference type="InterPro" id="IPR015727">
    <property type="entry name" value="Protein_Kinase_C_mu-related"/>
</dbReference>
<dbReference type="InterPro" id="IPR008271">
    <property type="entry name" value="Ser/Thr_kinase_AS"/>
</dbReference>
<dbReference type="PANTHER" id="PTHR22968">
    <property type="entry name" value="PROTEIN KINASE C, MU"/>
    <property type="match status" value="1"/>
</dbReference>
<dbReference type="PANTHER" id="PTHR22968:SF12">
    <property type="entry name" value="SERINE_THREONINE-PROTEIN KINASE D2"/>
    <property type="match status" value="1"/>
</dbReference>
<dbReference type="Pfam" id="PF00130">
    <property type="entry name" value="C1_1"/>
    <property type="match status" value="2"/>
</dbReference>
<dbReference type="Pfam" id="PF00169">
    <property type="entry name" value="PH"/>
    <property type="match status" value="1"/>
</dbReference>
<dbReference type="Pfam" id="PF00069">
    <property type="entry name" value="Pkinase"/>
    <property type="match status" value="1"/>
</dbReference>
<dbReference type="PIRSF" id="PIRSF000552">
    <property type="entry name" value="PKC_mu_nu_D2"/>
    <property type="match status" value="1"/>
</dbReference>
<dbReference type="PRINTS" id="PR00008">
    <property type="entry name" value="DAGPEDOMAIN"/>
</dbReference>
<dbReference type="SMART" id="SM00109">
    <property type="entry name" value="C1"/>
    <property type="match status" value="2"/>
</dbReference>
<dbReference type="SMART" id="SM00233">
    <property type="entry name" value="PH"/>
    <property type="match status" value="1"/>
</dbReference>
<dbReference type="SMART" id="SM00220">
    <property type="entry name" value="S_TKc"/>
    <property type="match status" value="1"/>
</dbReference>
<dbReference type="SUPFAM" id="SSF57889">
    <property type="entry name" value="Cysteine-rich domain"/>
    <property type="match status" value="2"/>
</dbReference>
<dbReference type="SUPFAM" id="SSF50729">
    <property type="entry name" value="PH domain-like"/>
    <property type="match status" value="1"/>
</dbReference>
<dbReference type="SUPFAM" id="SSF56112">
    <property type="entry name" value="Protein kinase-like (PK-like)"/>
    <property type="match status" value="1"/>
</dbReference>
<dbReference type="PROSITE" id="PS50003">
    <property type="entry name" value="PH_DOMAIN"/>
    <property type="match status" value="1"/>
</dbReference>
<dbReference type="PROSITE" id="PS00107">
    <property type="entry name" value="PROTEIN_KINASE_ATP"/>
    <property type="match status" value="1"/>
</dbReference>
<dbReference type="PROSITE" id="PS50011">
    <property type="entry name" value="PROTEIN_KINASE_DOM"/>
    <property type="match status" value="1"/>
</dbReference>
<dbReference type="PROSITE" id="PS00108">
    <property type="entry name" value="PROTEIN_KINASE_ST"/>
    <property type="match status" value="1"/>
</dbReference>
<dbReference type="PROSITE" id="PS00479">
    <property type="entry name" value="ZF_DAG_PE_1"/>
    <property type="match status" value="2"/>
</dbReference>
<dbReference type="PROSITE" id="PS50081">
    <property type="entry name" value="ZF_DAG_PE_2"/>
    <property type="match status" value="2"/>
</dbReference>